<dbReference type="EMBL" id="U28377">
    <property type="protein sequence ID" value="AAA69137.1"/>
    <property type="status" value="ALT_INIT"/>
    <property type="molecule type" value="Genomic_DNA"/>
</dbReference>
<dbReference type="EMBL" id="U00096">
    <property type="protein sequence ID" value="QNV50516.1"/>
    <property type="molecule type" value="Genomic_DNA"/>
</dbReference>
<dbReference type="EMBL" id="AP009048">
    <property type="protein sequence ID" value="BAE77031.1"/>
    <property type="status" value="ALT_INIT"/>
    <property type="molecule type" value="Genomic_DNA"/>
</dbReference>
<dbReference type="PIR" id="H65082">
    <property type="entry name" value="H65082"/>
</dbReference>
<dbReference type="SMR" id="Q46834"/>
<dbReference type="BioGRID" id="4261896">
    <property type="interactions" value="14"/>
</dbReference>
<dbReference type="DIP" id="DIP-12204N"/>
<dbReference type="FunCoup" id="Q46834">
    <property type="interactions" value="40"/>
</dbReference>
<dbReference type="IntAct" id="Q46834">
    <property type="interactions" value="1"/>
</dbReference>
<dbReference type="KEGG" id="ecj:JW5484"/>
<dbReference type="KEGG" id="ecoc:C3026_16250"/>
<dbReference type="EchoBASE" id="EB2814"/>
<dbReference type="eggNOG" id="COG3031">
    <property type="taxonomic scope" value="Bacteria"/>
</dbReference>
<dbReference type="HOGENOM" id="CLU_068012_2_0_6"/>
<dbReference type="InParanoid" id="Q46834"/>
<dbReference type="OrthoDB" id="1491375at2"/>
<dbReference type="BioCyc" id="EcoCyc:G7537-MONOMER"/>
<dbReference type="Proteomes" id="UP000000625">
    <property type="component" value="Chromosome"/>
</dbReference>
<dbReference type="GO" id="GO:0005886">
    <property type="term" value="C:plasma membrane"/>
    <property type="evidence" value="ECO:0007669"/>
    <property type="project" value="UniProtKB-SubCell"/>
</dbReference>
<dbReference type="GO" id="GO:0015627">
    <property type="term" value="C:type II protein secretion system complex"/>
    <property type="evidence" value="ECO:0007669"/>
    <property type="project" value="InterPro"/>
</dbReference>
<dbReference type="GO" id="GO:0015628">
    <property type="term" value="P:protein secretion by the type II secretion system"/>
    <property type="evidence" value="ECO:0007669"/>
    <property type="project" value="InterPro"/>
</dbReference>
<dbReference type="Gene3D" id="2.30.30.830">
    <property type="match status" value="1"/>
</dbReference>
<dbReference type="Gene3D" id="2.30.42.10">
    <property type="match status" value="1"/>
</dbReference>
<dbReference type="InterPro" id="IPR036034">
    <property type="entry name" value="PDZ_sf"/>
</dbReference>
<dbReference type="InterPro" id="IPR024961">
    <property type="entry name" value="T2SS_GspC_N"/>
</dbReference>
<dbReference type="InterPro" id="IPR001639">
    <property type="entry name" value="T2SS_protein-GspC"/>
</dbReference>
<dbReference type="NCBIfam" id="NF007242">
    <property type="entry name" value="PRK09681.1"/>
    <property type="match status" value="1"/>
</dbReference>
<dbReference type="NCBIfam" id="TIGR01713">
    <property type="entry name" value="typeII_sec_gspC"/>
    <property type="match status" value="1"/>
</dbReference>
<dbReference type="Pfam" id="PF11356">
    <property type="entry name" value="T2SSC"/>
    <property type="match status" value="1"/>
</dbReference>
<dbReference type="SUPFAM" id="SSF50156">
    <property type="entry name" value="PDZ domain-like"/>
    <property type="match status" value="1"/>
</dbReference>
<dbReference type="PROSITE" id="PS01141">
    <property type="entry name" value="T2SP_C"/>
    <property type="match status" value="1"/>
</dbReference>
<protein>
    <recommendedName>
        <fullName>Putative type II secretion system C-type protein YghF</fullName>
    </recommendedName>
    <alternativeName>
        <fullName>Putative general secretion pathway C-type protein YghF</fullName>
    </alternativeName>
</protein>
<feature type="chain" id="PRO_0000013096" description="Putative type II secretion system C-type protein YghF">
    <location>
        <begin position="1"/>
        <end position="331"/>
    </location>
</feature>
<feature type="transmembrane region" description="Helical" evidence="1">
    <location>
        <begin position="44"/>
        <end position="60"/>
    </location>
</feature>
<keyword id="KW-0997">Cell inner membrane</keyword>
<keyword id="KW-1003">Cell membrane</keyword>
<keyword id="KW-0472">Membrane</keyword>
<keyword id="KW-0653">Protein transport</keyword>
<keyword id="KW-1185">Reference proteome</keyword>
<keyword id="KW-0812">Transmembrane</keyword>
<keyword id="KW-1133">Transmembrane helix</keyword>
<keyword id="KW-0813">Transport</keyword>
<name>YGHF_ECOLI</name>
<reference key="1">
    <citation type="journal article" date="1997" name="Science">
        <title>The complete genome sequence of Escherichia coli K-12.</title>
        <authorList>
            <person name="Blattner F.R."/>
            <person name="Plunkett G. III"/>
            <person name="Bloch C.A."/>
            <person name="Perna N.T."/>
            <person name="Burland V."/>
            <person name="Riley M."/>
            <person name="Collado-Vides J."/>
            <person name="Glasner J.D."/>
            <person name="Rode C.K."/>
            <person name="Mayhew G.F."/>
            <person name="Gregor J."/>
            <person name="Davis N.W."/>
            <person name="Kirkpatrick H.A."/>
            <person name="Goeden M.A."/>
            <person name="Rose D.J."/>
            <person name="Mau B."/>
            <person name="Shao Y."/>
        </authorList>
    </citation>
    <scope>NUCLEOTIDE SEQUENCE [LARGE SCALE GENOMIC DNA]</scope>
    <source>
        <strain>K12 / MG1655 / ATCC 47076</strain>
    </source>
</reference>
<reference key="2">
    <citation type="journal article" date="2006" name="Mol. Syst. Biol.">
        <title>Highly accurate genome sequences of Escherichia coli K-12 strains MG1655 and W3110.</title>
        <authorList>
            <person name="Hayashi K."/>
            <person name="Morooka N."/>
            <person name="Yamamoto Y."/>
            <person name="Fujita K."/>
            <person name="Isono K."/>
            <person name="Choi S."/>
            <person name="Ohtsubo E."/>
            <person name="Baba T."/>
            <person name="Wanner B.L."/>
            <person name="Mori H."/>
            <person name="Horiuchi T."/>
        </authorList>
    </citation>
    <scope>NUCLEOTIDE SEQUENCE [LARGE SCALE GENOMIC DNA]</scope>
    <source>
        <strain>K12 / W3110 / ATCC 27325 / DSM 5911</strain>
    </source>
</reference>
<gene>
    <name evidence="2" type="primary">yghF</name>
    <name type="synonym">ecfA</name>
    <name evidence="4" type="ordered locus">b2970</name>
    <name type="ordered locus">JW5484</name>
</gene>
<comment type="function">
    <text evidence="3">Involved in a type II secretion system (T2SS, formerly general secretion pathway, GSP) for the export of folded proteins across the outer membrane.</text>
</comment>
<comment type="subcellular location">
    <subcellularLocation>
        <location evidence="1">Cell inner membrane</location>
        <topology evidence="1">Single-pass membrane protein</topology>
    </subcellularLocation>
</comment>
<comment type="miscellaneous">
    <text evidence="3">In many other E.coli strains this gene is part of a type II secretion system, but in MG1655 the locus is missing a number of genes.</text>
</comment>
<comment type="similarity">
    <text evidence="3">Belongs to the GSP C family.</text>
</comment>
<comment type="sequence caution" evidence="3">
    <conflict type="erroneous initiation">
        <sequence resource="EMBL-CDS" id="AAA69137"/>
    </conflict>
    <text>Truncated N-terminus.</text>
</comment>
<comment type="sequence caution" evidence="3">
    <conflict type="erroneous initiation">
        <sequence resource="EMBL-CDS" id="BAE77031"/>
    </conflict>
    <text>Truncated N-terminus.</text>
</comment>
<proteinExistence type="inferred from homology"/>
<sequence length="331" mass="37349">MARVVFRDARIYLIQWLTKIRHTLNQRQSLNTDKEHLRKIARGMFWLMLLIISAKMAHSLWRYISFSAEYTAVSQPVNKPSRVDAKTFDKNDVQLISQQNWFGKYQPVAAQVKQPEPVPVAETRLNVVLRGIAFGARPGAVIEEGGKQQVYLQGETLGSHNAVIEEINRDHVMLRYQGKIERLSLAEEERSTVAVTNKKAVSDEAKQAVAEPAVSVPVEIPAAVRQALAKDPQKIFNYIQLTPVRKEGIVGYAAKPGADRSLFDASGFKEGDIAIALNQQDFTDPRAMIALMRQLPSMDSIQLTVLRKGARHDISIALRYRLFCPPYWKKS</sequence>
<organism>
    <name type="scientific">Escherichia coli (strain K12)</name>
    <dbReference type="NCBI Taxonomy" id="83333"/>
    <lineage>
        <taxon>Bacteria</taxon>
        <taxon>Pseudomonadati</taxon>
        <taxon>Pseudomonadota</taxon>
        <taxon>Gammaproteobacteria</taxon>
        <taxon>Enterobacterales</taxon>
        <taxon>Enterobacteriaceae</taxon>
        <taxon>Escherichia</taxon>
    </lineage>
</organism>
<evidence type="ECO:0000255" key="1"/>
<evidence type="ECO:0000303" key="2">
    <source>
    </source>
</evidence>
<evidence type="ECO:0000305" key="3"/>
<evidence type="ECO:0000312" key="4">
    <source>
        <dbReference type="EMBL" id="QNV50516.1"/>
    </source>
</evidence>
<accession>Q46834</accession>
<accession>A0A7H2C769</accession>
<accession>Q2M9M5</accession>